<proteinExistence type="evidence at protein level"/>
<gene>
    <name type="primary">Bcat2</name>
    <name type="synonym">Bcatm</name>
    <name type="synonym">Eca40</name>
</gene>
<accession>O35855</accession>
<accession>Q8VD03</accession>
<reference key="1">
    <citation type="journal article" date="2004" name="Genome Res.">
        <title>The status, quality, and expansion of the NIH full-length cDNA project: the Mammalian Gene Collection (MGC).</title>
        <authorList>
            <consortium name="The MGC Project Team"/>
        </authorList>
    </citation>
    <scope>NUCLEOTIDE SEQUENCE [LARGE SCALE MRNA]</scope>
    <source>
        <strain>FVB/N</strain>
        <tissue>Kidney</tissue>
        <tissue>Salivary gland</tissue>
    </source>
</reference>
<reference key="2">
    <citation type="journal article" date="1997" name="Biochim. Biophys. Acta">
        <title>Cloning of the rat and human mitochondrial branched chain aminotransferases (BCATm).</title>
        <authorList>
            <person name="Bledsoe R.K."/>
            <person name="Dawson P.A."/>
            <person name="Hutson S.M."/>
        </authorList>
    </citation>
    <scope>NUCLEOTIDE SEQUENCE [MRNA] OF 1-275</scope>
</reference>
<reference key="3">
    <citation type="journal article" date="2010" name="Cell">
        <title>A tissue-specific atlas of mouse protein phosphorylation and expression.</title>
        <authorList>
            <person name="Huttlin E.L."/>
            <person name="Jedrychowski M.P."/>
            <person name="Elias J.E."/>
            <person name="Goswami T."/>
            <person name="Rad R."/>
            <person name="Beausoleil S.A."/>
            <person name="Villen J."/>
            <person name="Haas W."/>
            <person name="Sowa M.E."/>
            <person name="Gygi S.P."/>
        </authorList>
    </citation>
    <scope>IDENTIFICATION BY MASS SPECTROMETRY [LARGE SCALE ANALYSIS]</scope>
    <source>
        <tissue>Brain</tissue>
        <tissue>Brown adipose tissue</tissue>
        <tissue>Heart</tissue>
        <tissue>Kidney</tissue>
        <tissue>Lung</tissue>
        <tissue>Pancreas</tissue>
        <tissue>Spleen</tissue>
        <tissue>Testis</tissue>
    </source>
</reference>
<sequence>MAAATLGQVWARKLLPVPWLLCGSKRCVSSIFKAADLQIQMTKEPQKKPAPSQALLFGKTFTDHMLMVEWNNKAGWGPPRIQPFQNLTLHPACSGLHYSLQLFEGLKAYKGGDQQVRLFRPWLNMDRMLRSARRLCLPDFDKQELLECIRQLIEVDKDWVPDGNGTSLYVRPVLIGNEPSLGVGMVTQALLYVILCPVGSYFPGDSMTPVSLLADPSFVRAWIGGVGDCKLGGNYGPTVAVQREAQKRGCEQVLWLYGPDHQLTEVGTMNIFVYWTHEDGVLELVTPPLNGVILPGVVRQSLLDLARTWGEFRVAERKVTMKELKRALEEGRVREVFGSGTACQVCPVHQILYEGKQLHIPTMENGPELILRFQKELKAIQYGASAHDWMFRV</sequence>
<keyword id="KW-0007">Acetylation</keyword>
<keyword id="KW-0028">Amino-acid biosynthesis</keyword>
<keyword id="KW-0032">Aminotransferase</keyword>
<keyword id="KW-0100">Branched-chain amino acid biosynthesis</keyword>
<keyword id="KW-0443">Lipid metabolism</keyword>
<keyword id="KW-0496">Mitochondrion</keyword>
<keyword id="KW-0663">Pyridoxal phosphate</keyword>
<keyword id="KW-1185">Reference proteome</keyword>
<keyword id="KW-0808">Transferase</keyword>
<keyword id="KW-0809">Transit peptide</keyword>
<name>BCAT2_MOUSE</name>
<dbReference type="EC" id="2.6.1.42" evidence="1"/>
<dbReference type="EMBL" id="BC017688">
    <property type="protein sequence ID" value="AAH17688.1"/>
    <property type="molecule type" value="mRNA"/>
</dbReference>
<dbReference type="EMBL" id="BC048072">
    <property type="protein sequence ID" value="AAH48072.1"/>
    <property type="molecule type" value="mRNA"/>
</dbReference>
<dbReference type="EMBL" id="U68526">
    <property type="protein sequence ID" value="AAB67674.1"/>
    <property type="molecule type" value="mRNA"/>
</dbReference>
<dbReference type="CCDS" id="CCDS21252.1"/>
<dbReference type="RefSeq" id="NP_033867.1">
    <property type="nucleotide sequence ID" value="NM_009737.4"/>
</dbReference>
<dbReference type="SMR" id="O35855"/>
<dbReference type="BioGRID" id="198312">
    <property type="interactions" value="2"/>
</dbReference>
<dbReference type="FunCoup" id="O35855">
    <property type="interactions" value="2632"/>
</dbReference>
<dbReference type="STRING" id="10090.ENSMUSP00000033098"/>
<dbReference type="GlyGen" id="O35855">
    <property type="glycosylation" value="2 sites, 1 O-linked glycan (1 site)"/>
</dbReference>
<dbReference type="iPTMnet" id="O35855"/>
<dbReference type="PhosphoSitePlus" id="O35855"/>
<dbReference type="SwissPalm" id="O35855"/>
<dbReference type="REPRODUCTION-2DPAGE" id="O35855"/>
<dbReference type="jPOST" id="O35855"/>
<dbReference type="PaxDb" id="10090-ENSMUSP00000033098"/>
<dbReference type="PeptideAtlas" id="O35855"/>
<dbReference type="ProteomicsDB" id="273476"/>
<dbReference type="Pumba" id="O35855"/>
<dbReference type="Antibodypedia" id="31810">
    <property type="antibodies" value="260 antibodies from 31 providers"/>
</dbReference>
<dbReference type="DNASU" id="12036"/>
<dbReference type="Ensembl" id="ENSMUST00000033098.16">
    <property type="protein sequence ID" value="ENSMUSP00000033098.8"/>
    <property type="gene ID" value="ENSMUSG00000030826.20"/>
</dbReference>
<dbReference type="GeneID" id="12036"/>
<dbReference type="KEGG" id="mmu:12036"/>
<dbReference type="UCSC" id="uc009gwc.2">
    <property type="organism name" value="mouse"/>
</dbReference>
<dbReference type="AGR" id="MGI:1276534"/>
<dbReference type="CTD" id="587"/>
<dbReference type="MGI" id="MGI:1276534">
    <property type="gene designation" value="Bcat2"/>
</dbReference>
<dbReference type="VEuPathDB" id="HostDB:ENSMUSG00000030826"/>
<dbReference type="eggNOG" id="KOG0975">
    <property type="taxonomic scope" value="Eukaryota"/>
</dbReference>
<dbReference type="GeneTree" id="ENSGT00390000009532"/>
<dbReference type="InParanoid" id="O35855"/>
<dbReference type="OMA" id="LTEVFAC"/>
<dbReference type="OrthoDB" id="1732691at2759"/>
<dbReference type="PhylomeDB" id="O35855"/>
<dbReference type="TreeFam" id="TF300882"/>
<dbReference type="BRENDA" id="2.6.1.42">
    <property type="organism ID" value="3474"/>
</dbReference>
<dbReference type="Reactome" id="R-MMU-70895">
    <property type="pathway name" value="Branched-chain amino acid catabolism"/>
</dbReference>
<dbReference type="BioGRID-ORCS" id="12036">
    <property type="hits" value="1 hit in 79 CRISPR screens"/>
</dbReference>
<dbReference type="ChiTaRS" id="Bcat2">
    <property type="organism name" value="mouse"/>
</dbReference>
<dbReference type="PRO" id="PR:O35855"/>
<dbReference type="Proteomes" id="UP000000589">
    <property type="component" value="Chromosome 7"/>
</dbReference>
<dbReference type="RNAct" id="O35855">
    <property type="molecule type" value="protein"/>
</dbReference>
<dbReference type="Bgee" id="ENSMUSG00000030826">
    <property type="expression patterns" value="Expressed in hindlimb stylopod muscle and 201 other cell types or tissues"/>
</dbReference>
<dbReference type="ExpressionAtlas" id="O35855">
    <property type="expression patterns" value="baseline and differential"/>
</dbReference>
<dbReference type="GO" id="GO:0005739">
    <property type="term" value="C:mitochondrion"/>
    <property type="evidence" value="ECO:0000314"/>
    <property type="project" value="MGI"/>
</dbReference>
<dbReference type="GO" id="GO:0005654">
    <property type="term" value="C:nucleoplasm"/>
    <property type="evidence" value="ECO:0007669"/>
    <property type="project" value="Ensembl"/>
</dbReference>
<dbReference type="GO" id="GO:0004084">
    <property type="term" value="F:branched-chain-amino-acid transaminase activity"/>
    <property type="evidence" value="ECO:0000314"/>
    <property type="project" value="MGI"/>
</dbReference>
<dbReference type="GO" id="GO:0052656">
    <property type="term" value="F:L-isoleucine-2-oxoglutarate transaminase activity"/>
    <property type="evidence" value="ECO:0007669"/>
    <property type="project" value="Ensembl"/>
</dbReference>
<dbReference type="GO" id="GO:0052654">
    <property type="term" value="F:L-leucine-2-oxoglutarate transaminase activity"/>
    <property type="evidence" value="ECO:0007669"/>
    <property type="project" value="Ensembl"/>
</dbReference>
<dbReference type="GO" id="GO:0052655">
    <property type="term" value="F:L-valine-2-oxoglutarate transaminase activity"/>
    <property type="evidence" value="ECO:0007669"/>
    <property type="project" value="Ensembl"/>
</dbReference>
<dbReference type="GO" id="GO:0008652">
    <property type="term" value="P:amino acid biosynthetic process"/>
    <property type="evidence" value="ECO:0007669"/>
    <property type="project" value="UniProtKB-KW"/>
</dbReference>
<dbReference type="GO" id="GO:0009082">
    <property type="term" value="P:branched-chain amino acid biosynthetic process"/>
    <property type="evidence" value="ECO:0007669"/>
    <property type="project" value="UniProtKB-KW"/>
</dbReference>
<dbReference type="GO" id="GO:0009083">
    <property type="term" value="P:branched-chain amino acid catabolic process"/>
    <property type="evidence" value="ECO:0000315"/>
    <property type="project" value="MGI"/>
</dbReference>
<dbReference type="GO" id="GO:0009081">
    <property type="term" value="P:branched-chain amino acid metabolic process"/>
    <property type="evidence" value="ECO:0000315"/>
    <property type="project" value="MGI"/>
</dbReference>
<dbReference type="GO" id="GO:1990830">
    <property type="term" value="P:cellular response to leukemia inhibitory factor"/>
    <property type="evidence" value="ECO:0000270"/>
    <property type="project" value="MGI"/>
</dbReference>
<dbReference type="GO" id="GO:0006550">
    <property type="term" value="P:isoleucine catabolic process"/>
    <property type="evidence" value="ECO:0000315"/>
    <property type="project" value="MGI"/>
</dbReference>
<dbReference type="GO" id="GO:0006549">
    <property type="term" value="P:isoleucine metabolic process"/>
    <property type="evidence" value="ECO:0000315"/>
    <property type="project" value="MGI"/>
</dbReference>
<dbReference type="GO" id="GO:0006551">
    <property type="term" value="P:L-leucine metabolic process"/>
    <property type="evidence" value="ECO:0000315"/>
    <property type="project" value="MGI"/>
</dbReference>
<dbReference type="GO" id="GO:0006629">
    <property type="term" value="P:lipid metabolic process"/>
    <property type="evidence" value="ECO:0007669"/>
    <property type="project" value="UniProtKB-KW"/>
</dbReference>
<dbReference type="GO" id="GO:0010817">
    <property type="term" value="P:regulation of hormone levels"/>
    <property type="evidence" value="ECO:0000315"/>
    <property type="project" value="MGI"/>
</dbReference>
<dbReference type="GO" id="GO:0006573">
    <property type="term" value="P:valine metabolic process"/>
    <property type="evidence" value="ECO:0000315"/>
    <property type="project" value="MGI"/>
</dbReference>
<dbReference type="CDD" id="cd01557">
    <property type="entry name" value="BCAT_beta_family"/>
    <property type="match status" value="1"/>
</dbReference>
<dbReference type="FunFam" id="3.30.470.10:FF:000002">
    <property type="entry name" value="Branched-chain-amino-acid aminotransferase"/>
    <property type="match status" value="1"/>
</dbReference>
<dbReference type="FunFam" id="3.20.10.10:FF:000007">
    <property type="entry name" value="Branched-chain-amino-acid aminotransferase, mitochondrial"/>
    <property type="match status" value="1"/>
</dbReference>
<dbReference type="Gene3D" id="3.30.470.10">
    <property type="match status" value="1"/>
</dbReference>
<dbReference type="Gene3D" id="3.20.10.10">
    <property type="entry name" value="D-amino Acid Aminotransferase, subunit A, domain 2"/>
    <property type="match status" value="1"/>
</dbReference>
<dbReference type="InterPro" id="IPR001544">
    <property type="entry name" value="Aminotrans_IV"/>
</dbReference>
<dbReference type="InterPro" id="IPR018300">
    <property type="entry name" value="Aminotrans_IV_CS"/>
</dbReference>
<dbReference type="InterPro" id="IPR036038">
    <property type="entry name" value="Aminotransferase-like"/>
</dbReference>
<dbReference type="InterPro" id="IPR005786">
    <property type="entry name" value="B_amino_transII"/>
</dbReference>
<dbReference type="InterPro" id="IPR043132">
    <property type="entry name" value="BCAT-like_C"/>
</dbReference>
<dbReference type="InterPro" id="IPR043131">
    <property type="entry name" value="BCAT-like_N"/>
</dbReference>
<dbReference type="InterPro" id="IPR033939">
    <property type="entry name" value="BCAT_family"/>
</dbReference>
<dbReference type="NCBIfam" id="TIGR01123">
    <property type="entry name" value="ilvE_II"/>
    <property type="match status" value="1"/>
</dbReference>
<dbReference type="NCBIfam" id="NF009897">
    <property type="entry name" value="PRK13357.1"/>
    <property type="match status" value="1"/>
</dbReference>
<dbReference type="PANTHER" id="PTHR11825:SF39">
    <property type="entry name" value="BRANCHED-CHAIN-AMINO-ACID AMINOTRANSFERASE, MITOCHONDRIAL"/>
    <property type="match status" value="1"/>
</dbReference>
<dbReference type="PANTHER" id="PTHR11825">
    <property type="entry name" value="SUBGROUP IIII AMINOTRANSFERASE"/>
    <property type="match status" value="1"/>
</dbReference>
<dbReference type="Pfam" id="PF01063">
    <property type="entry name" value="Aminotran_4"/>
    <property type="match status" value="1"/>
</dbReference>
<dbReference type="PIRSF" id="PIRSF006468">
    <property type="entry name" value="BCAT1"/>
    <property type="match status" value="1"/>
</dbReference>
<dbReference type="SUPFAM" id="SSF56752">
    <property type="entry name" value="D-aminoacid aminotransferase-like PLP-dependent enzymes"/>
    <property type="match status" value="1"/>
</dbReference>
<dbReference type="PROSITE" id="PS00770">
    <property type="entry name" value="AA_TRANSFER_CLASS_4"/>
    <property type="match status" value="1"/>
</dbReference>
<evidence type="ECO:0000250" key="1">
    <source>
        <dbReference type="UniProtKB" id="O15382"/>
    </source>
</evidence>
<evidence type="ECO:0000250" key="2">
    <source>
        <dbReference type="UniProtKB" id="O35854"/>
    </source>
</evidence>
<evidence type="ECO:0000305" key="3"/>
<feature type="transit peptide" description="Mitochondrion" evidence="2">
    <location>
        <begin position="1"/>
        <end position="27"/>
    </location>
</feature>
<feature type="chain" id="PRO_0000001272" description="Branched-chain-amino-acid aminotransferase, mitochondrial">
    <location>
        <begin position="28"/>
        <end position="393"/>
    </location>
</feature>
<feature type="binding site" evidence="1">
    <location>
        <position position="169"/>
    </location>
    <ligand>
        <name>substrate</name>
    </ligand>
</feature>
<feature type="modified residue" description="N6-(pyridoxal phosphate)lysine" evidence="1">
    <location>
        <position position="230"/>
    </location>
</feature>
<feature type="modified residue" description="N6-acetyllysine" evidence="1">
    <location>
        <position position="322"/>
    </location>
</feature>
<feature type="sequence conflict" description="In Ref. 2; AAB67674." evidence="3" ref="2">
    <original>G</original>
    <variation>A</variation>
    <location>
        <position position="199"/>
    </location>
</feature>
<organism>
    <name type="scientific">Mus musculus</name>
    <name type="common">Mouse</name>
    <dbReference type="NCBI Taxonomy" id="10090"/>
    <lineage>
        <taxon>Eukaryota</taxon>
        <taxon>Metazoa</taxon>
        <taxon>Chordata</taxon>
        <taxon>Craniata</taxon>
        <taxon>Vertebrata</taxon>
        <taxon>Euteleostomi</taxon>
        <taxon>Mammalia</taxon>
        <taxon>Eutheria</taxon>
        <taxon>Euarchontoglires</taxon>
        <taxon>Glires</taxon>
        <taxon>Rodentia</taxon>
        <taxon>Myomorpha</taxon>
        <taxon>Muroidea</taxon>
        <taxon>Muridae</taxon>
        <taxon>Murinae</taxon>
        <taxon>Mus</taxon>
        <taxon>Mus</taxon>
    </lineage>
</organism>
<protein>
    <recommendedName>
        <fullName>Branched-chain-amino-acid aminotransferase, mitochondrial</fullName>
        <shortName>BCAT(m)</shortName>
        <ecNumber evidence="1">2.6.1.42</ecNumber>
    </recommendedName>
</protein>
<comment type="function">
    <text evidence="1 2">Catalyzes the first reaction in the catabolism of the essential branched chain amino acids leucine, isoleucine, and valine (By similarity). May also function as a transporter of branched chain alpha-keto acids (By similarity).</text>
</comment>
<comment type="catalytic activity">
    <reaction evidence="1">
        <text>L-leucine + 2-oxoglutarate = 4-methyl-2-oxopentanoate + L-glutamate</text>
        <dbReference type="Rhea" id="RHEA:18321"/>
        <dbReference type="ChEBI" id="CHEBI:16810"/>
        <dbReference type="ChEBI" id="CHEBI:17865"/>
        <dbReference type="ChEBI" id="CHEBI:29985"/>
        <dbReference type="ChEBI" id="CHEBI:57427"/>
        <dbReference type="EC" id="2.6.1.42"/>
    </reaction>
</comment>
<comment type="catalytic activity">
    <reaction evidence="1">
        <text>L-isoleucine + 2-oxoglutarate = (S)-3-methyl-2-oxopentanoate + L-glutamate</text>
        <dbReference type="Rhea" id="RHEA:24801"/>
        <dbReference type="ChEBI" id="CHEBI:16810"/>
        <dbReference type="ChEBI" id="CHEBI:29985"/>
        <dbReference type="ChEBI" id="CHEBI:35146"/>
        <dbReference type="ChEBI" id="CHEBI:58045"/>
        <dbReference type="EC" id="2.6.1.42"/>
    </reaction>
</comment>
<comment type="catalytic activity">
    <reaction evidence="1">
        <text>L-valine + 2-oxoglutarate = 3-methyl-2-oxobutanoate + L-glutamate</text>
        <dbReference type="Rhea" id="RHEA:24813"/>
        <dbReference type="ChEBI" id="CHEBI:11851"/>
        <dbReference type="ChEBI" id="CHEBI:16810"/>
        <dbReference type="ChEBI" id="CHEBI:29985"/>
        <dbReference type="ChEBI" id="CHEBI:57762"/>
        <dbReference type="EC" id="2.6.1.42"/>
    </reaction>
</comment>
<comment type="cofactor">
    <cofactor evidence="1">
        <name>pyridoxal 5'-phosphate</name>
        <dbReference type="ChEBI" id="CHEBI:597326"/>
    </cofactor>
</comment>
<comment type="subunit">
    <text evidence="1">Homodimer.</text>
</comment>
<comment type="subcellular location">
    <subcellularLocation>
        <location evidence="2">Mitochondrion</location>
    </subcellularLocation>
</comment>
<comment type="similarity">
    <text evidence="3">Belongs to the class-IV pyridoxal-phosphate-dependent aminotransferase family.</text>
</comment>